<evidence type="ECO:0000250" key="1">
    <source>
        <dbReference type="UniProtKB" id="B8YB55"/>
    </source>
</evidence>
<evidence type="ECO:0000250" key="2">
    <source>
        <dbReference type="UniProtKB" id="P11513"/>
    </source>
</evidence>
<evidence type="ECO:0000303" key="3">
    <source>
    </source>
</evidence>
<evidence type="ECO:0000305" key="4"/>
<organism>
    <name type="scientific">Methanothermobacter thermautotrophicus (strain Winter)</name>
    <name type="common">Methanobacterium thermoautotrophicum</name>
    <dbReference type="NCBI Taxonomy" id="79930"/>
    <lineage>
        <taxon>Archaea</taxon>
        <taxon>Methanobacteriati</taxon>
        <taxon>Methanobacteriota</taxon>
        <taxon>Methanomada group</taxon>
        <taxon>Methanobacteria</taxon>
        <taxon>Methanobacteriales</taxon>
        <taxon>Methanobacteriaceae</taxon>
        <taxon>Methanothermobacter</taxon>
    </lineage>
</organism>
<keyword id="KW-0963">Cytoplasm</keyword>
<keyword id="KW-0238">DNA-binding</keyword>
<keyword id="KW-0240">DNA-directed RNA polymerase</keyword>
<keyword id="KW-0548">Nucleotidyltransferase</keyword>
<keyword id="KW-0804">Transcription</keyword>
<keyword id="KW-0808">Transferase</keyword>
<feature type="chain" id="PRO_0000074033" description="DNA-directed RNA polymerase subunit Rpo2N">
    <location>
        <begin position="1"/>
        <end position="515"/>
    </location>
</feature>
<accession>P09844</accession>
<dbReference type="EC" id="2.7.7.6" evidence="2"/>
<dbReference type="EMBL" id="X08038">
    <property type="protein sequence ID" value="CAA30836.1"/>
    <property type="molecule type" value="Genomic_DNA"/>
</dbReference>
<dbReference type="EMBL" id="M20391">
    <property type="protein sequence ID" value="AAA72652.1"/>
    <property type="molecule type" value="Genomic_DNA"/>
</dbReference>
<dbReference type="PIR" id="S02194">
    <property type="entry name" value="S02194"/>
</dbReference>
<dbReference type="SMR" id="P09844"/>
<dbReference type="GO" id="GO:0005737">
    <property type="term" value="C:cytoplasm"/>
    <property type="evidence" value="ECO:0007669"/>
    <property type="project" value="UniProtKB-SubCell"/>
</dbReference>
<dbReference type="GO" id="GO:0000428">
    <property type="term" value="C:DNA-directed RNA polymerase complex"/>
    <property type="evidence" value="ECO:0007669"/>
    <property type="project" value="UniProtKB-KW"/>
</dbReference>
<dbReference type="GO" id="GO:0003677">
    <property type="term" value="F:DNA binding"/>
    <property type="evidence" value="ECO:0007669"/>
    <property type="project" value="UniProtKB-KW"/>
</dbReference>
<dbReference type="GO" id="GO:0003899">
    <property type="term" value="F:DNA-directed RNA polymerase activity"/>
    <property type="evidence" value="ECO:0007669"/>
    <property type="project" value="UniProtKB-EC"/>
</dbReference>
<dbReference type="GO" id="GO:0032549">
    <property type="term" value="F:ribonucleoside binding"/>
    <property type="evidence" value="ECO:0007669"/>
    <property type="project" value="InterPro"/>
</dbReference>
<dbReference type="GO" id="GO:0006351">
    <property type="term" value="P:DNA-templated transcription"/>
    <property type="evidence" value="ECO:0007669"/>
    <property type="project" value="InterPro"/>
</dbReference>
<dbReference type="Gene3D" id="3.90.1100.10">
    <property type="match status" value="2"/>
</dbReference>
<dbReference type="Gene3D" id="3.90.1110.10">
    <property type="entry name" value="RNA polymerase Rpb2, domain 2"/>
    <property type="match status" value="1"/>
</dbReference>
<dbReference type="InterPro" id="IPR015712">
    <property type="entry name" value="DNA-dir_RNA_pol_su2"/>
</dbReference>
<dbReference type="InterPro" id="IPR007644">
    <property type="entry name" value="RNA_pol_bsu_protrusion"/>
</dbReference>
<dbReference type="InterPro" id="IPR007642">
    <property type="entry name" value="RNA_pol_Rpb2_2"/>
</dbReference>
<dbReference type="InterPro" id="IPR037034">
    <property type="entry name" value="RNA_pol_Rpb2_2_sf"/>
</dbReference>
<dbReference type="InterPro" id="IPR007645">
    <property type="entry name" value="RNA_pol_Rpb2_3"/>
</dbReference>
<dbReference type="NCBIfam" id="NF007175">
    <property type="entry name" value="PRK09606.1"/>
    <property type="match status" value="1"/>
</dbReference>
<dbReference type="PANTHER" id="PTHR20856">
    <property type="entry name" value="DNA-DIRECTED RNA POLYMERASE I SUBUNIT 2"/>
    <property type="match status" value="1"/>
</dbReference>
<dbReference type="Pfam" id="PF04563">
    <property type="entry name" value="RNA_pol_Rpb2_1"/>
    <property type="match status" value="1"/>
</dbReference>
<dbReference type="Pfam" id="PF04561">
    <property type="entry name" value="RNA_pol_Rpb2_2"/>
    <property type="match status" value="1"/>
</dbReference>
<dbReference type="Pfam" id="PF04565">
    <property type="entry name" value="RNA_pol_Rpb2_3"/>
    <property type="match status" value="1"/>
</dbReference>
<dbReference type="SUPFAM" id="SSF64484">
    <property type="entry name" value="beta and beta-prime subunits of DNA dependent RNA-polymerase"/>
    <property type="match status" value="1"/>
</dbReference>
<gene>
    <name evidence="4" type="primary">rpo2N</name>
    <name type="synonym">rpoB2</name>
    <name type="synonym">rpoV</name>
</gene>
<comment type="function">
    <text evidence="1">DNA-dependent RNA polymerase (RNAP) catalyzes the transcription of DNA into RNA using the four ribonucleoside triphosphates as substrates. The Rpo2 subunit (Rpo2N and Rpo2C in this organism) is implicated in DNA promoter recognition and in nucleotide binding.</text>
</comment>
<comment type="catalytic activity">
    <reaction evidence="2">
        <text>RNA(n) + a ribonucleoside 5'-triphosphate = RNA(n+1) + diphosphate</text>
        <dbReference type="Rhea" id="RHEA:21248"/>
        <dbReference type="Rhea" id="RHEA-COMP:14527"/>
        <dbReference type="Rhea" id="RHEA-COMP:17342"/>
        <dbReference type="ChEBI" id="CHEBI:33019"/>
        <dbReference type="ChEBI" id="CHEBI:61557"/>
        <dbReference type="ChEBI" id="CHEBI:140395"/>
        <dbReference type="EC" id="2.7.7.6"/>
    </reaction>
</comment>
<comment type="subunit">
    <text evidence="1">Part of the RNA polymerase complex.</text>
</comment>
<comment type="subcellular location">
    <subcellularLocation>
        <location evidence="1">Cytoplasm</location>
    </subcellularLocation>
</comment>
<comment type="similarity">
    <text evidence="4">Belongs to the RNA polymerase beta chain family.</text>
</comment>
<proteinExistence type="inferred from homology"/>
<name>RPO2N_METTW</name>
<reference key="1">
    <citation type="journal article" date="1988" name="Nucleic Acids Res.">
        <title>Relatedness of archaebacterial RNA polymerase core subunits to their eubacterial and eukaryotic equivalents.</title>
        <authorList>
            <person name="Berghoefer B."/>
            <person name="Kroeckel L."/>
            <person name="Koertner C."/>
            <person name="Truss M."/>
            <person name="Schallenberg J."/>
            <person name="Klein A."/>
        </authorList>
    </citation>
    <scope>NUCLEOTIDE SEQUENCE [GENOMIC DNA]</scope>
</reference>
<reference key="2">
    <citation type="journal article" date="1988" name="J. Bacteriol.">
        <title>Cloning and physical mapping of RNA polymerase genes from Methanobacterium thermoautotrophicum and comparison of homologies and gene orders with those of RNA polymerase genes from other methanogenic archaebacteria.</title>
        <authorList>
            <person name="Schallenberg J."/>
            <person name="Moes M."/>
            <person name="Truss M."/>
            <person name="Reiser W."/>
            <person name="Thomm M."/>
            <person name="Stetter K.O."/>
            <person name="Klein A."/>
        </authorList>
    </citation>
    <scope>NUCLEOTIDE SEQUENCE [GENOMIC DNA] OF 238-515</scope>
</reference>
<protein>
    <recommendedName>
        <fullName evidence="4">DNA-directed RNA polymerase subunit Rpo2N</fullName>
        <ecNumber evidence="2">2.7.7.6</ecNumber>
    </recommendedName>
    <alternativeName>
        <fullName evidence="3">DNA-directed RNA polymerase subunit B''</fullName>
    </alternativeName>
</protein>
<sequence length="515" mass="58631">MKKSAWGLVDAFFDKYDLVDHHIHSYNDFVSNRIQEIIDTSEPIELEQGQYTVETGKVTIEKPFIKEADGSKSKIYPTEARLRNLTYSAHMSLEMRLLKEGGSETEFEKVHIGELPVMLKSEICHLHGLGRDELIEKGEDPADLGGYFIVNASERSIVTMEEIAPNKIILERIGEEDEKRARAIVTSIRSGFRARISLEYRKPRKTGVFLRISFPYVPGELPLVILLRALGLATDQEIITSISDDFNYQMIAADDIQVSLDKLKLDSDKMEEEMDEEERREYLIRSAIKYIGNRVAKGMTEDYRIKRAEDVIDRYLLPHIGTEPDKRLEKAVYLAEMTEMLLQVISGERKPHDKDHYTNKRLRVSGDLMEDLFRVAFTSLTRDMSYRLERSLARGKEPSVKQAVRSDVLSENLKHAIATGNWVGGRAGVSQLLDRTSYMGTLSHMRRVVSPLSRSQPHFEARDLHPTQFGKICPNETPESPNCGLVKNLALMAKISEGSDPDEIEEVIKKMGVIN</sequence>